<proteinExistence type="inferred from homology"/>
<keyword id="KW-0010">Activator</keyword>
<keyword id="KW-0238">DNA-binding</keyword>
<keyword id="KW-0244">Early protein</keyword>
<keyword id="KW-1035">Host cytoplasm</keyword>
<keyword id="KW-1048">Host nucleus</keyword>
<keyword id="KW-0597">Phosphoprotein</keyword>
<keyword id="KW-0804">Transcription</keyword>
<keyword id="KW-0805">Transcription regulation</keyword>
<keyword id="KW-0946">Virion</keyword>
<keyword id="KW-0920">Virion tegument</keyword>
<protein>
    <recommendedName>
        <fullName>Major viral transcription factor ICP4 homolog</fullName>
    </recommendedName>
    <alternativeName>
        <fullName>Immediate-early protein 62</fullName>
        <shortName>IE62</shortName>
    </alternativeName>
</protein>
<dbReference type="EMBL" id="AF206304">
    <property type="protein sequence ID" value="AAF61663.1"/>
    <property type="molecule type" value="Genomic_DNA"/>
</dbReference>
<dbReference type="EMBL" id="AH010548">
    <property type="protein sequence ID" value="AAK19942.1"/>
    <property type="molecule type" value="Genomic_DNA"/>
</dbReference>
<dbReference type="EMBL" id="AB097932">
    <property type="protein sequence ID" value="BAC44881.1"/>
    <property type="molecule type" value="Genomic_DNA"/>
</dbReference>
<dbReference type="EMBL" id="AB097933">
    <property type="protein sequence ID" value="BAC44882.1"/>
    <property type="molecule type" value="Genomic_DNA"/>
</dbReference>
<dbReference type="EMBL" id="DQ008354">
    <property type="protein sequence ID" value="AAY57671.1"/>
    <property type="molecule type" value="Genomic_DNA"/>
</dbReference>
<dbReference type="EMBL" id="DQ008354">
    <property type="protein sequence ID" value="AAY57680.1"/>
    <property type="molecule type" value="Genomic_DNA"/>
</dbReference>
<dbReference type="EMBL" id="DQ008355">
    <property type="protein sequence ID" value="AAY57742.1"/>
    <property type="molecule type" value="Genomic_DNA"/>
</dbReference>
<dbReference type="EMBL" id="DQ008355">
    <property type="protein sequence ID" value="AAY57751.1"/>
    <property type="molecule type" value="Genomic_DNA"/>
</dbReference>
<dbReference type="SMR" id="Q8AZM1"/>
<dbReference type="IntAct" id="Q8AZM1">
    <property type="interactions" value="23"/>
</dbReference>
<dbReference type="MINT" id="Q8AZM1"/>
<dbReference type="Proteomes" id="UP000002603">
    <property type="component" value="Genome"/>
</dbReference>
<dbReference type="Proteomes" id="UP000008504">
    <property type="component" value="Genome"/>
</dbReference>
<dbReference type="Proteomes" id="UP000008505">
    <property type="component" value="Genome"/>
</dbReference>
<dbReference type="Proteomes" id="UP000008506">
    <property type="component" value="Genome"/>
</dbReference>
<dbReference type="GO" id="GO:0030430">
    <property type="term" value="C:host cell cytoplasm"/>
    <property type="evidence" value="ECO:0007669"/>
    <property type="project" value="UniProtKB-SubCell"/>
</dbReference>
<dbReference type="GO" id="GO:0042025">
    <property type="term" value="C:host cell nucleus"/>
    <property type="evidence" value="ECO:0007669"/>
    <property type="project" value="UniProtKB-SubCell"/>
</dbReference>
<dbReference type="GO" id="GO:0019033">
    <property type="term" value="C:viral tegument"/>
    <property type="evidence" value="ECO:0007669"/>
    <property type="project" value="UniProtKB-SubCell"/>
</dbReference>
<dbReference type="GO" id="GO:0003677">
    <property type="term" value="F:DNA binding"/>
    <property type="evidence" value="ECO:0007669"/>
    <property type="project" value="UniProtKB-KW"/>
</dbReference>
<dbReference type="GO" id="GO:0039695">
    <property type="term" value="P:DNA-templated viral transcription"/>
    <property type="evidence" value="ECO:0000250"/>
    <property type="project" value="UniProtKB"/>
</dbReference>
<dbReference type="GO" id="GO:0045893">
    <property type="term" value="P:positive regulation of DNA-templated transcription"/>
    <property type="evidence" value="ECO:0007669"/>
    <property type="project" value="InterPro"/>
</dbReference>
<dbReference type="InterPro" id="IPR005205">
    <property type="entry name" value="Herpes_ICP4_C"/>
</dbReference>
<dbReference type="InterPro" id="IPR005206">
    <property type="entry name" value="Herpes_ICP4_N"/>
</dbReference>
<dbReference type="Pfam" id="PF03585">
    <property type="entry name" value="Herpes_ICP4_C"/>
    <property type="match status" value="1"/>
</dbReference>
<dbReference type="Pfam" id="PF03584">
    <property type="entry name" value="Herpes_ICP4_N"/>
    <property type="match status" value="1"/>
</dbReference>
<organismHost>
    <name type="scientific">Homo sapiens</name>
    <name type="common">Human</name>
    <dbReference type="NCBI Taxonomy" id="9606"/>
</organismHost>
<evidence type="ECO:0000250" key="1"/>
<evidence type="ECO:0000255" key="2"/>
<evidence type="ECO:0000256" key="3">
    <source>
        <dbReference type="SAM" id="MobiDB-lite"/>
    </source>
</evidence>
<evidence type="ECO:0000305" key="4"/>
<feature type="chain" id="PRO_0000385461" description="Major viral transcription factor ICP4 homolog">
    <location>
        <begin position="1"/>
        <end position="1310"/>
    </location>
</feature>
<feature type="region of interest" description="Disordered" evidence="3">
    <location>
        <begin position="117"/>
        <end position="271"/>
    </location>
</feature>
<feature type="region of interest" description="Disordered" evidence="3">
    <location>
        <begin position="285"/>
        <end position="454"/>
    </location>
</feature>
<feature type="region of interest" description="Disordered" evidence="3">
    <location>
        <begin position="636"/>
        <end position="696"/>
    </location>
</feature>
<feature type="region of interest" description="Disordered" evidence="3">
    <location>
        <begin position="1195"/>
        <end position="1258"/>
    </location>
</feature>
<feature type="region of interest" description="Disordered" evidence="3">
    <location>
        <begin position="1282"/>
        <end position="1310"/>
    </location>
</feature>
<feature type="short sequence motif" description="Nuclear localization signal" evidence="2">
    <location>
        <begin position="677"/>
        <end position="685"/>
    </location>
</feature>
<feature type="compositionally biased region" description="Basic and acidic residues" evidence="3">
    <location>
        <begin position="341"/>
        <end position="350"/>
    </location>
</feature>
<feature type="compositionally biased region" description="Low complexity" evidence="3">
    <location>
        <begin position="351"/>
        <end position="364"/>
    </location>
</feature>
<feature type="compositionally biased region" description="Low complexity" evidence="3">
    <location>
        <begin position="392"/>
        <end position="407"/>
    </location>
</feature>
<feature type="compositionally biased region" description="Low complexity" evidence="3">
    <location>
        <begin position="648"/>
        <end position="666"/>
    </location>
</feature>
<feature type="compositionally biased region" description="Basic and acidic residues" evidence="3">
    <location>
        <begin position="1217"/>
        <end position="1227"/>
    </location>
</feature>
<feature type="compositionally biased region" description="Acidic residues" evidence="3">
    <location>
        <begin position="1228"/>
        <end position="1250"/>
    </location>
</feature>
<feature type="modified residue" description="Phosphoserine; by VZV ORF66" evidence="1">
    <location>
        <position position="686"/>
    </location>
</feature>
<feature type="modified residue" description="Phosphoserine; by VZV ORF66" evidence="1">
    <location>
        <position position="722"/>
    </location>
</feature>
<feature type="sequence variant" description="In strain: Oka varicella vaccine Biken (V-Oka-Biken), Oka varicella vaccine VarilRix (V-Oka-GSK) and Oka varicella vaccine Varivax (V-Oka-Merck).">
    <original>S</original>
    <variation>G</variation>
    <location>
        <position position="628"/>
    </location>
</feature>
<feature type="sequence variant" description="In strain: Oka varicella vaccine Biken (V-Oka-Biken), Oka varicella vaccine VarilRix (V-Oka-GSK) and Oka varicella vaccine Varivax (V-Oka-Merck).">
    <original>R</original>
    <variation>G</variation>
    <location>
        <position position="958"/>
    </location>
</feature>
<feature type="sequence variant" description="In strain: Oka varicella vaccine Biken (V-Oka-Biken), Oka varicella vaccine VarilRix (V-Oka-GSK) and Oka varicella vaccine Varivax (V-Oka-Merck).">
    <original>V</original>
    <variation>A</variation>
    <location>
        <position position="1197"/>
    </location>
</feature>
<feature type="sequence variant" description="In strain: Oka varicella vaccine Biken (V-Oka-Biken), Oka varicella vaccine VarilRix (V-Oka-GSK) and Oka varicella vaccine Varivax (V-Oka-Merck).">
    <original>I</original>
    <variation>V</variation>
    <location>
        <position position="1260"/>
    </location>
</feature>
<feature type="sequence variant" description="In strain: Oka varicella vaccine Biken (V-Oka-Biken).">
    <original>L</original>
    <variation>S</variation>
    <location>
        <position position="1275"/>
    </location>
</feature>
<gene>
    <name type="ORF">ORF62</name>
</gene>
<gene>
    <name type="ORF">ORF71</name>
</gene>
<comment type="function">
    <text evidence="1">Transcriptional transactivator. May interact with and recruit specific components of the general transcription machinery to viral promoters and stabilize their formation for transcription initiation. Negatively regulates its own transcription. This immediate early (EI) protein may be necessary in virion for viral pathogenesis (By similarity).</text>
</comment>
<comment type="subunit">
    <text evidence="1">Interacts with IE4 and IE63. Interacts with human USF1 and SP1 (By similarity).</text>
</comment>
<comment type="subcellular location">
    <subcellularLocation>
        <location evidence="1">Host nucleus</location>
    </subcellularLocation>
    <subcellularLocation>
        <location evidence="1">Host cytoplasm</location>
    </subcellularLocation>
    <subcellularLocation>
        <location evidence="1">Virion tegument</location>
    </subcellularLocation>
    <text evidence="1">Localizes to the cytoplasm when phosphorylated.</text>
</comment>
<comment type="PTM">
    <text evidence="1">Phosphorylated by ORF66 protein kinase on Ser-686 and Ser-722. Also phosphorylated by ORF47 protein kinase and by human CSNK2A1/CKII (By similarity).</text>
</comment>
<comment type="miscellaneous">
    <text>Encoded both by ORF62 and ORF71 within the inverted repeat sequences bounding the Us region of the VZV genome.</text>
</comment>
<comment type="similarity">
    <text evidence="4">Belongs to the herpesviridae ICP4 family.</text>
</comment>
<sequence length="1310" mass="139996">MDTPPMQRSTPQRAGSPDTLELMDLLDAAAAAAEHRARVVTSSQPDDLLFGENGVMVGREHEIVSIPSVSGLQPEPRTEDVGEELTQDDYVCEDGQDLMGSPVIPLAEVFHTRFSEAGAREPTGADRSLETVSLGTKLARSPKPPMNDGETGRGTTPPFPQAFSPVSPASPVGDAAGNDQREDQRSIPRQTTRGNSPGLPSVVHRDRQTQSISGKKPGDEQAGHAHASGDGVVLQKTQRPAQGKSPKKKTLKVKVPLPARKPGGPVPGPVEQLYHVLSDSVPAKGAKADLPFETDDTRPRKHDARGITPRVPGRSSGGKPRAFLALPGRSHAPDPIEDDSPVEKKPKSREFVSSSSSSSSWGSSSEDEDDEPRRVSVGSETTGSRSGREHAPSPSNSDDSDSNDGGSTKQNIQPGYRSISGPDPRIRKTKRLAGEPGRQRQKSFSLPRSRTPIIPPVSGPLMMPDGSPWPGSAPLPSNRVRFGPSGETREGHWEDEAVRAARARYEASTEPVPLYVPELGDPARQYRALINLIYCPDRDPIAWLQNPKLTGVNSALNQFYQKLLPPGRAGTAVTGSVASPVPHVGEAMATGEALWALPHAAAAVAMSRRYDRAQKHFILQSLRRAFASMAYPEATGSSPAARISRGHPSPTTPATQTPDPQPSAAARSLSVCPPDDRLRTPRKRKSQPVESRSLLDKIRETPVADARVADDHVVSKAKRRVSEPVTITSGPVVDPPAVITMPLDGPAPNGGFRRIPRGALHTPVPSDQARKAYCTPETIARLVDDPLFPTAWRPALSFDPGALAEIAARRPGGGDRRFGPPSGVEALRRRCAWMRQIPDPEDVRLLIIYDPLPGEDINGPLESTLATDPGPSWSPSRGGLSVVLAALSNRLCLPSTHAWAGNWTGPPDVSALNARGVLLLSTRDLAFAGAVEYLGSRLASARRRLLVLDAVALERWPRDGPALSQYHVYVRAPARPDAQAVVRWPDSAVTEGLARAVFASSRTFGPASFARIETAFANLYPGEQPLCLCRGGNVAYTVCTRAGPKTRVPLSPREYRQYVLPGFDGCKDLARQSRGLGLGAADFVDEAAHSHRAANRWGLGAALRPVFLPEGRRPGAAGPEAGDVPTWARVFCRHALLEPDPAAEPLVLPPVAGRSVALYASADEARNALPPIPRVMWPPGFGAAETVLEGSDGTRFVFGHHGGSERPAETQAGRQRRTADDREHALEPDDWEVGCEDAWDSEEGGGDDGDAPGSSFGVSIVSVAPGVLRDRRVGLRPAVKVELLSSSSSSEDEDDVWGGRGGRSPPQSRG</sequence>
<name>ICP4_VZVO</name>
<accession>Q8AZM1</accession>
<accession>Q4JQQ4</accession>
<accession>Q4JQR3</accession>
<accession>Q4JQX5</accession>
<accession>Q8AZM2</accession>
<accession>Q98WV6</accession>
<accession>Q9J3N0</accession>
<organism>
    <name type="scientific">Varicella-zoster virus (strain Oka vaccine)</name>
    <name type="common">HHV-3</name>
    <name type="synonym">Human herpesvirus 3</name>
    <dbReference type="NCBI Taxonomy" id="341980"/>
    <lineage>
        <taxon>Viruses</taxon>
        <taxon>Duplodnaviria</taxon>
        <taxon>Heunggongvirae</taxon>
        <taxon>Peploviricota</taxon>
        <taxon>Herviviricetes</taxon>
        <taxon>Herpesvirales</taxon>
        <taxon>Orthoherpesviridae</taxon>
        <taxon>Alphaherpesvirinae</taxon>
        <taxon>Varicellovirus</taxon>
        <taxon>Varicellovirus humanalpha3</taxon>
        <taxon>Human herpesvirus 3</taxon>
    </lineage>
</organism>
<reference key="1">
    <citation type="journal article" date="2000" name="J. Infect. Dis.">
        <title>Nucleotide sequences that distinguish Oka vaccine from parental Oka and other varicella-zoster virus isolates.</title>
        <authorList>
            <person name="Argaw T."/>
            <person name="Cohen J.I."/>
            <person name="Klutch M."/>
            <person name="Lekstrom K."/>
            <person name="Yoshikawa T."/>
            <person name="Asano Y."/>
            <person name="Krause P.R."/>
        </authorList>
    </citation>
    <scope>NUCLEOTIDE SEQUENCE [LARGE SCALE GENOMIC DNA]</scope>
    <source>
        <strain>Oka varicella vaccine Biken (V-Oka-Biken)</strain>
    </source>
</reference>
<reference key="2">
    <citation type="journal article" date="2001" name="Virology">
        <title>Identification and mapping of single nucleotide polymorphisms in the varicella-zoster virus genome.</title>
        <authorList>
            <person name="Faga B."/>
            <person name="Maury W."/>
            <person name="Bruckner D.A."/>
            <person name="Grose C."/>
        </authorList>
    </citation>
    <scope>NUCLEOTIDE SEQUENCE [LARGE SCALE GENOMIC DNA]</scope>
    <source>
        <strain>Isolate Human/Japan/P-Oka/1970</strain>
    </source>
</reference>
<reference key="3">
    <citation type="journal article" date="2002" name="J. Virol.">
        <title>Comparison of the complete DNA sequences of the Oka varicella vaccine and its parental virus.</title>
        <authorList>
            <person name="Gomi Y."/>
            <person name="Sunamachi H."/>
            <person name="Mori Y."/>
            <person name="Nagaike K."/>
            <person name="Takahashi M."/>
            <person name="Yamanishi K."/>
        </authorList>
    </citation>
    <scope>NUCLEOTIDE SEQUENCE [LARGE SCALE GENOMIC DNA]</scope>
    <source>
        <strain>Isolate Human/Japan/P-Oka/1970</strain>
        <strain>Oka varicella vaccine Biken (V-Oka-Biken)</strain>
    </source>
</reference>
<reference key="4">
    <citation type="journal article" date="2008" name="J. Virol.">
        <title>Complete DNA sequences of two oka strain varicella-zoster virus genomes.</title>
        <authorList>
            <person name="Tillieux S.L."/>
            <person name="Halsey W.S."/>
            <person name="Thomas E.S."/>
            <person name="Voycik J.J."/>
            <person name="Sathe G.M."/>
            <person name="Vassilev V."/>
        </authorList>
    </citation>
    <scope>NUCLEOTIDE SEQUENCE [LARGE SCALE GENOMIC DNA]</scope>
    <source>
        <strain>Oka varicella vaccine VarilRix (V-Oka-GSK)</strain>
        <strain>Oka varicella vaccine Varivax (V-Oka-Merck)</strain>
    </source>
</reference>